<accession>Q9PC09</accession>
<comment type="catalytic activity">
    <reaction evidence="2">
        <text>5-phospho-beta-D-ribosylamine + glycine + ATP = N(1)-(5-phospho-beta-D-ribosyl)glycinamide + ADP + phosphate + H(+)</text>
        <dbReference type="Rhea" id="RHEA:17453"/>
        <dbReference type="ChEBI" id="CHEBI:15378"/>
        <dbReference type="ChEBI" id="CHEBI:30616"/>
        <dbReference type="ChEBI" id="CHEBI:43474"/>
        <dbReference type="ChEBI" id="CHEBI:57305"/>
        <dbReference type="ChEBI" id="CHEBI:58681"/>
        <dbReference type="ChEBI" id="CHEBI:143788"/>
        <dbReference type="ChEBI" id="CHEBI:456216"/>
        <dbReference type="EC" id="6.3.4.13"/>
    </reaction>
</comment>
<comment type="cofactor">
    <cofactor evidence="1">
        <name>Mg(2+)</name>
        <dbReference type="ChEBI" id="CHEBI:18420"/>
    </cofactor>
    <cofactor evidence="1">
        <name>Mn(2+)</name>
        <dbReference type="ChEBI" id="CHEBI:29035"/>
    </cofactor>
    <text evidence="1">Binds 1 Mg(2+) or Mn(2+) ion per subunit.</text>
</comment>
<comment type="pathway">
    <text evidence="2">Purine metabolism; IMP biosynthesis via de novo pathway; N(1)-(5-phospho-D-ribosyl)glycinamide from 5-phospho-alpha-D-ribose 1-diphosphate: step 2/2.</text>
</comment>
<comment type="similarity">
    <text evidence="2">Belongs to the GARS family.</text>
</comment>
<name>PUR2_XYLFA</name>
<organism>
    <name type="scientific">Xylella fastidiosa (strain 9a5c)</name>
    <dbReference type="NCBI Taxonomy" id="160492"/>
    <lineage>
        <taxon>Bacteria</taxon>
        <taxon>Pseudomonadati</taxon>
        <taxon>Pseudomonadota</taxon>
        <taxon>Gammaproteobacteria</taxon>
        <taxon>Lysobacterales</taxon>
        <taxon>Lysobacteraceae</taxon>
        <taxon>Xylella</taxon>
    </lineage>
</organism>
<reference key="1">
    <citation type="journal article" date="2000" name="Nature">
        <title>The genome sequence of the plant pathogen Xylella fastidiosa.</title>
        <authorList>
            <person name="Simpson A.J.G."/>
            <person name="Reinach F.C."/>
            <person name="Arruda P."/>
            <person name="Abreu F.A."/>
            <person name="Acencio M."/>
            <person name="Alvarenga R."/>
            <person name="Alves L.M.C."/>
            <person name="Araya J.E."/>
            <person name="Baia G.S."/>
            <person name="Baptista C.S."/>
            <person name="Barros M.H."/>
            <person name="Bonaccorsi E.D."/>
            <person name="Bordin S."/>
            <person name="Bove J.M."/>
            <person name="Briones M.R.S."/>
            <person name="Bueno M.R.P."/>
            <person name="Camargo A.A."/>
            <person name="Camargo L.E.A."/>
            <person name="Carraro D.M."/>
            <person name="Carrer H."/>
            <person name="Colauto N.B."/>
            <person name="Colombo C."/>
            <person name="Costa F.F."/>
            <person name="Costa M.C.R."/>
            <person name="Costa-Neto C.M."/>
            <person name="Coutinho L.L."/>
            <person name="Cristofani M."/>
            <person name="Dias-Neto E."/>
            <person name="Docena C."/>
            <person name="El-Dorry H."/>
            <person name="Facincani A.P."/>
            <person name="Ferreira A.J.S."/>
            <person name="Ferreira V.C.A."/>
            <person name="Ferro J.A."/>
            <person name="Fraga J.S."/>
            <person name="Franca S.C."/>
            <person name="Franco M.C."/>
            <person name="Frohme M."/>
            <person name="Furlan L.R."/>
            <person name="Garnier M."/>
            <person name="Goldman G.H."/>
            <person name="Goldman M.H.S."/>
            <person name="Gomes S.L."/>
            <person name="Gruber A."/>
            <person name="Ho P.L."/>
            <person name="Hoheisel J.D."/>
            <person name="Junqueira M.L."/>
            <person name="Kemper E.L."/>
            <person name="Kitajima J.P."/>
            <person name="Krieger J.E."/>
            <person name="Kuramae E.E."/>
            <person name="Laigret F."/>
            <person name="Lambais M.R."/>
            <person name="Leite L.C.C."/>
            <person name="Lemos E.G.M."/>
            <person name="Lemos M.V.F."/>
            <person name="Lopes S.A."/>
            <person name="Lopes C.R."/>
            <person name="Machado J.A."/>
            <person name="Machado M.A."/>
            <person name="Madeira A.M.B.N."/>
            <person name="Madeira H.M.F."/>
            <person name="Marino C.L."/>
            <person name="Marques M.V."/>
            <person name="Martins E.A.L."/>
            <person name="Martins E.M.F."/>
            <person name="Matsukuma A.Y."/>
            <person name="Menck C.F.M."/>
            <person name="Miracca E.C."/>
            <person name="Miyaki C.Y."/>
            <person name="Monteiro-Vitorello C.B."/>
            <person name="Moon D.H."/>
            <person name="Nagai M.A."/>
            <person name="Nascimento A.L.T.O."/>
            <person name="Netto L.E.S."/>
            <person name="Nhani A. Jr."/>
            <person name="Nobrega F.G."/>
            <person name="Nunes L.R."/>
            <person name="Oliveira M.A."/>
            <person name="de Oliveira M.C."/>
            <person name="de Oliveira R.C."/>
            <person name="Palmieri D.A."/>
            <person name="Paris A."/>
            <person name="Peixoto B.R."/>
            <person name="Pereira G.A.G."/>
            <person name="Pereira H.A. Jr."/>
            <person name="Pesquero J.B."/>
            <person name="Quaggio R.B."/>
            <person name="Roberto P.G."/>
            <person name="Rodrigues V."/>
            <person name="de Rosa A.J.M."/>
            <person name="de Rosa V.E. Jr."/>
            <person name="de Sa R.G."/>
            <person name="Santelli R.V."/>
            <person name="Sawasaki H.E."/>
            <person name="da Silva A.C.R."/>
            <person name="da Silva A.M."/>
            <person name="da Silva F.R."/>
            <person name="Silva W.A. Jr."/>
            <person name="da Silveira J.F."/>
            <person name="Silvestri M.L.Z."/>
            <person name="Siqueira W.J."/>
            <person name="de Souza A.A."/>
            <person name="de Souza A.P."/>
            <person name="Terenzi M.F."/>
            <person name="Truffi D."/>
            <person name="Tsai S.M."/>
            <person name="Tsuhako M.H."/>
            <person name="Vallada H."/>
            <person name="Van Sluys M.A."/>
            <person name="Verjovski-Almeida S."/>
            <person name="Vettore A.L."/>
            <person name="Zago M.A."/>
            <person name="Zatz M."/>
            <person name="Meidanis J."/>
            <person name="Setubal J.C."/>
        </authorList>
    </citation>
    <scope>NUCLEOTIDE SEQUENCE [LARGE SCALE GENOMIC DNA]</scope>
    <source>
        <strain>9a5c</strain>
    </source>
</reference>
<sequence>MKLLVIGSGGREHALAWKLAHSRRVSEIIVAPGNAGTATETKCRNAPVKVTDLDGLLALAQREAVNITVVGPEVPLVAGIVDCFRAAGMRIFGPTAAAAQLEGSKAYAKDFLARHGIPTARYAVHTNVDAAISDVRQQGAPIVIKADGLAAGKGVIVAMTVTEAEAAIRDMLSGNAFGHAGARVVIEEYLDGEEASFISMVDGTHALPMATSQDHKRVSDGDIGPNTGGMGAYSPAPIITDEIHARVMREIVNPTVTGMIADGTPFMGFLYAGLMIDVHGAPKVIEFNVRFGDPETQPMMMRLQSDLLDLIEAALNGDLDKVQAQWDPRPSLGVVMAARPYPKAPITGEIISGLDALPANVKVFHAGTALDAAGCVVTAGGRVLCVTALGSNVSEAQRHAYAGVASLHWANAFQRSDIGWRAIMREHTVTLNVHGPV</sequence>
<dbReference type="EC" id="6.3.4.13" evidence="2"/>
<dbReference type="EMBL" id="AE003849">
    <property type="protein sequence ID" value="AAF84778.1"/>
    <property type="molecule type" value="Genomic_DNA"/>
</dbReference>
<dbReference type="PIR" id="D82614">
    <property type="entry name" value="D82614"/>
</dbReference>
<dbReference type="RefSeq" id="WP_010894434.1">
    <property type="nucleotide sequence ID" value="NC_002488.3"/>
</dbReference>
<dbReference type="SMR" id="Q9PC09"/>
<dbReference type="STRING" id="160492.XF_1976"/>
<dbReference type="KEGG" id="xfa:XF_1976"/>
<dbReference type="PATRIC" id="fig|160492.11.peg.2104"/>
<dbReference type="eggNOG" id="COG0151">
    <property type="taxonomic scope" value="Bacteria"/>
</dbReference>
<dbReference type="HOGENOM" id="CLU_027420_3_1_6"/>
<dbReference type="UniPathway" id="UPA00074">
    <property type="reaction ID" value="UER00125"/>
</dbReference>
<dbReference type="Proteomes" id="UP000000812">
    <property type="component" value="Chromosome"/>
</dbReference>
<dbReference type="GO" id="GO:0005524">
    <property type="term" value="F:ATP binding"/>
    <property type="evidence" value="ECO:0007669"/>
    <property type="project" value="UniProtKB-KW"/>
</dbReference>
<dbReference type="GO" id="GO:0046872">
    <property type="term" value="F:metal ion binding"/>
    <property type="evidence" value="ECO:0007669"/>
    <property type="project" value="UniProtKB-KW"/>
</dbReference>
<dbReference type="GO" id="GO:0004637">
    <property type="term" value="F:phosphoribosylamine-glycine ligase activity"/>
    <property type="evidence" value="ECO:0007669"/>
    <property type="project" value="UniProtKB-UniRule"/>
</dbReference>
<dbReference type="GO" id="GO:0006189">
    <property type="term" value="P:'de novo' IMP biosynthetic process"/>
    <property type="evidence" value="ECO:0007669"/>
    <property type="project" value="UniProtKB-UniRule"/>
</dbReference>
<dbReference type="GO" id="GO:0009113">
    <property type="term" value="P:purine nucleobase biosynthetic process"/>
    <property type="evidence" value="ECO:0007669"/>
    <property type="project" value="InterPro"/>
</dbReference>
<dbReference type="FunFam" id="3.30.470.20:FF:000031">
    <property type="entry name" value="Phosphoribosylamine--glycine ligase"/>
    <property type="match status" value="1"/>
</dbReference>
<dbReference type="FunFam" id="3.40.50.20:FF:000006">
    <property type="entry name" value="Phosphoribosylamine--glycine ligase, chloroplastic"/>
    <property type="match status" value="1"/>
</dbReference>
<dbReference type="FunFam" id="3.30.1490.20:FF:000006">
    <property type="entry name" value="phosphoribosylamine--glycine ligase, chloroplastic-like"/>
    <property type="match status" value="1"/>
</dbReference>
<dbReference type="FunFam" id="3.90.600.10:FF:000001">
    <property type="entry name" value="Trifunctional purine biosynthetic protein adenosine-3"/>
    <property type="match status" value="1"/>
</dbReference>
<dbReference type="Gene3D" id="3.40.50.20">
    <property type="match status" value="1"/>
</dbReference>
<dbReference type="Gene3D" id="3.30.1490.20">
    <property type="entry name" value="ATP-grasp fold, A domain"/>
    <property type="match status" value="1"/>
</dbReference>
<dbReference type="Gene3D" id="3.30.470.20">
    <property type="entry name" value="ATP-grasp fold, B domain"/>
    <property type="match status" value="1"/>
</dbReference>
<dbReference type="Gene3D" id="3.90.600.10">
    <property type="entry name" value="Phosphoribosylglycinamide synthetase, C-terminal domain"/>
    <property type="match status" value="1"/>
</dbReference>
<dbReference type="HAMAP" id="MF_00138">
    <property type="entry name" value="GARS"/>
    <property type="match status" value="1"/>
</dbReference>
<dbReference type="InterPro" id="IPR011761">
    <property type="entry name" value="ATP-grasp"/>
</dbReference>
<dbReference type="InterPro" id="IPR013815">
    <property type="entry name" value="ATP_grasp_subdomain_1"/>
</dbReference>
<dbReference type="InterPro" id="IPR016185">
    <property type="entry name" value="PreATP-grasp_dom_sf"/>
</dbReference>
<dbReference type="InterPro" id="IPR020561">
    <property type="entry name" value="PRibGlycinamid_synth_ATP-grasp"/>
</dbReference>
<dbReference type="InterPro" id="IPR000115">
    <property type="entry name" value="PRibGlycinamide_synth"/>
</dbReference>
<dbReference type="InterPro" id="IPR020560">
    <property type="entry name" value="PRibGlycinamide_synth_C-dom"/>
</dbReference>
<dbReference type="InterPro" id="IPR037123">
    <property type="entry name" value="PRibGlycinamide_synth_C_sf"/>
</dbReference>
<dbReference type="InterPro" id="IPR020559">
    <property type="entry name" value="PRibGlycinamide_synth_CS"/>
</dbReference>
<dbReference type="InterPro" id="IPR020562">
    <property type="entry name" value="PRibGlycinamide_synth_N"/>
</dbReference>
<dbReference type="InterPro" id="IPR011054">
    <property type="entry name" value="Rudment_hybrid_motif"/>
</dbReference>
<dbReference type="NCBIfam" id="TIGR00877">
    <property type="entry name" value="purD"/>
    <property type="match status" value="1"/>
</dbReference>
<dbReference type="PANTHER" id="PTHR43472">
    <property type="entry name" value="PHOSPHORIBOSYLAMINE--GLYCINE LIGASE"/>
    <property type="match status" value="1"/>
</dbReference>
<dbReference type="PANTHER" id="PTHR43472:SF1">
    <property type="entry name" value="PHOSPHORIBOSYLAMINE--GLYCINE LIGASE, CHLOROPLASTIC"/>
    <property type="match status" value="1"/>
</dbReference>
<dbReference type="Pfam" id="PF01071">
    <property type="entry name" value="GARS_A"/>
    <property type="match status" value="1"/>
</dbReference>
<dbReference type="Pfam" id="PF02843">
    <property type="entry name" value="GARS_C"/>
    <property type="match status" value="1"/>
</dbReference>
<dbReference type="Pfam" id="PF02844">
    <property type="entry name" value="GARS_N"/>
    <property type="match status" value="1"/>
</dbReference>
<dbReference type="SMART" id="SM01209">
    <property type="entry name" value="GARS_A"/>
    <property type="match status" value="1"/>
</dbReference>
<dbReference type="SMART" id="SM01210">
    <property type="entry name" value="GARS_C"/>
    <property type="match status" value="1"/>
</dbReference>
<dbReference type="SUPFAM" id="SSF56059">
    <property type="entry name" value="Glutathione synthetase ATP-binding domain-like"/>
    <property type="match status" value="1"/>
</dbReference>
<dbReference type="SUPFAM" id="SSF52440">
    <property type="entry name" value="PreATP-grasp domain"/>
    <property type="match status" value="1"/>
</dbReference>
<dbReference type="SUPFAM" id="SSF51246">
    <property type="entry name" value="Rudiment single hybrid motif"/>
    <property type="match status" value="1"/>
</dbReference>
<dbReference type="PROSITE" id="PS50975">
    <property type="entry name" value="ATP_GRASP"/>
    <property type="match status" value="1"/>
</dbReference>
<dbReference type="PROSITE" id="PS00184">
    <property type="entry name" value="GARS"/>
    <property type="match status" value="1"/>
</dbReference>
<feature type="chain" id="PRO_0000151504" description="Phosphoribosylamine--glycine ligase">
    <location>
        <begin position="1"/>
        <end position="437"/>
    </location>
</feature>
<feature type="domain" description="ATP-grasp" evidence="2">
    <location>
        <begin position="109"/>
        <end position="316"/>
    </location>
</feature>
<feature type="binding site" evidence="2">
    <location>
        <begin position="135"/>
        <end position="196"/>
    </location>
    <ligand>
        <name>ATP</name>
        <dbReference type="ChEBI" id="CHEBI:30616"/>
    </ligand>
</feature>
<feature type="binding site" evidence="2">
    <location>
        <position position="286"/>
    </location>
    <ligand>
        <name>Mg(2+)</name>
        <dbReference type="ChEBI" id="CHEBI:18420"/>
    </ligand>
</feature>
<feature type="binding site" evidence="2">
    <location>
        <position position="288"/>
    </location>
    <ligand>
        <name>Mg(2+)</name>
        <dbReference type="ChEBI" id="CHEBI:18420"/>
    </ligand>
</feature>
<proteinExistence type="inferred from homology"/>
<keyword id="KW-0067">ATP-binding</keyword>
<keyword id="KW-0436">Ligase</keyword>
<keyword id="KW-0460">Magnesium</keyword>
<keyword id="KW-0464">Manganese</keyword>
<keyword id="KW-0479">Metal-binding</keyword>
<keyword id="KW-0547">Nucleotide-binding</keyword>
<keyword id="KW-0658">Purine biosynthesis</keyword>
<evidence type="ECO:0000250" key="1"/>
<evidence type="ECO:0000255" key="2">
    <source>
        <dbReference type="HAMAP-Rule" id="MF_00138"/>
    </source>
</evidence>
<gene>
    <name evidence="2" type="primary">purD</name>
    <name type="ordered locus">XF_1976</name>
</gene>
<protein>
    <recommendedName>
        <fullName evidence="2">Phosphoribosylamine--glycine ligase</fullName>
        <ecNumber evidence="2">6.3.4.13</ecNumber>
    </recommendedName>
    <alternativeName>
        <fullName evidence="2">GARS</fullName>
    </alternativeName>
    <alternativeName>
        <fullName evidence="2">Glycinamide ribonucleotide synthetase</fullName>
    </alternativeName>
    <alternativeName>
        <fullName evidence="2">Phosphoribosylglycinamide synthetase</fullName>
    </alternativeName>
</protein>